<name>Y1164_DESRM</name>
<feature type="chain" id="PRO_0000366312" description="UPF0735 ACT domain-containing protein Dred_1164">
    <location>
        <begin position="1"/>
        <end position="148"/>
    </location>
</feature>
<feature type="domain" description="ACT" evidence="1">
    <location>
        <begin position="72"/>
        <end position="147"/>
    </location>
</feature>
<proteinExistence type="inferred from homology"/>
<dbReference type="EMBL" id="CP000612">
    <property type="protein sequence ID" value="ABO49698.1"/>
    <property type="molecule type" value="Genomic_DNA"/>
</dbReference>
<dbReference type="RefSeq" id="WP_011877524.1">
    <property type="nucleotide sequence ID" value="NC_009253.1"/>
</dbReference>
<dbReference type="SMR" id="A4J3P5"/>
<dbReference type="STRING" id="349161.Dred_1164"/>
<dbReference type="KEGG" id="drm:Dred_1164"/>
<dbReference type="eggNOG" id="COG4492">
    <property type="taxonomic scope" value="Bacteria"/>
</dbReference>
<dbReference type="HOGENOM" id="CLU_128147_0_0_9"/>
<dbReference type="OrthoDB" id="9788773at2"/>
<dbReference type="Proteomes" id="UP000001556">
    <property type="component" value="Chromosome"/>
</dbReference>
<dbReference type="CDD" id="cd04888">
    <property type="entry name" value="ACT_PheB-BS"/>
    <property type="match status" value="1"/>
</dbReference>
<dbReference type="Gene3D" id="3.30.70.260">
    <property type="match status" value="1"/>
</dbReference>
<dbReference type="HAMAP" id="MF_00707">
    <property type="entry name" value="UPF0735"/>
    <property type="match status" value="1"/>
</dbReference>
<dbReference type="InterPro" id="IPR045865">
    <property type="entry name" value="ACT-like_dom_sf"/>
</dbReference>
<dbReference type="InterPro" id="IPR002912">
    <property type="entry name" value="ACT_dom"/>
</dbReference>
<dbReference type="InterPro" id="IPR008310">
    <property type="entry name" value="UPF0735_ACT_dom-cont"/>
</dbReference>
<dbReference type="NCBIfam" id="NF003361">
    <property type="entry name" value="PRK04435.1"/>
    <property type="match status" value="1"/>
</dbReference>
<dbReference type="PIRSF" id="PIRSF025624">
    <property type="entry name" value="ACT_PheB"/>
    <property type="match status" value="1"/>
</dbReference>
<dbReference type="SUPFAM" id="SSF55021">
    <property type="entry name" value="ACT-like"/>
    <property type="match status" value="1"/>
</dbReference>
<dbReference type="PROSITE" id="PS51671">
    <property type="entry name" value="ACT"/>
    <property type="match status" value="1"/>
</dbReference>
<sequence length="148" mass="16562">MAKREPKYFLVQEDILPEAILKTVMAKDLLLKGAANTVNEAVEKVDLSRSAFYKYKDKVFPFHQWSRGKIVTLALLMEHQPGVLSTVLNIIASVKGSILTINQNLPLQDMANATLSVETAEMNQDLEELLRIIGEVEGVREVRLVGQN</sequence>
<protein>
    <recommendedName>
        <fullName evidence="1">UPF0735 ACT domain-containing protein Dred_1164</fullName>
    </recommendedName>
</protein>
<accession>A4J3P5</accession>
<gene>
    <name type="ordered locus">Dred_1164</name>
</gene>
<reference key="1">
    <citation type="submission" date="2007-03" db="EMBL/GenBank/DDBJ databases">
        <title>Complete sequence of Desulfotomaculum reducens MI-1.</title>
        <authorList>
            <consortium name="US DOE Joint Genome Institute"/>
            <person name="Copeland A."/>
            <person name="Lucas S."/>
            <person name="Lapidus A."/>
            <person name="Barry K."/>
            <person name="Detter J.C."/>
            <person name="Glavina del Rio T."/>
            <person name="Hammon N."/>
            <person name="Israni S."/>
            <person name="Dalin E."/>
            <person name="Tice H."/>
            <person name="Pitluck S."/>
            <person name="Sims D."/>
            <person name="Brettin T."/>
            <person name="Bruce D."/>
            <person name="Han C."/>
            <person name="Tapia R."/>
            <person name="Schmutz J."/>
            <person name="Larimer F."/>
            <person name="Land M."/>
            <person name="Hauser L."/>
            <person name="Kyrpides N."/>
            <person name="Kim E."/>
            <person name="Tebo B.M."/>
            <person name="Richardson P."/>
        </authorList>
    </citation>
    <scope>NUCLEOTIDE SEQUENCE [LARGE SCALE GENOMIC DNA]</scope>
    <source>
        <strain>ATCC BAA-1160 / DSM 100696 / MI-1</strain>
    </source>
</reference>
<keyword id="KW-1185">Reference proteome</keyword>
<comment type="similarity">
    <text evidence="1">Belongs to the UPF0735 family.</text>
</comment>
<organism>
    <name type="scientific">Desulforamulus reducens (strain ATCC BAA-1160 / DSM 100696 / MI-1)</name>
    <name type="common">Desulfotomaculum reducens</name>
    <dbReference type="NCBI Taxonomy" id="349161"/>
    <lineage>
        <taxon>Bacteria</taxon>
        <taxon>Bacillati</taxon>
        <taxon>Bacillota</taxon>
        <taxon>Clostridia</taxon>
        <taxon>Eubacteriales</taxon>
        <taxon>Peptococcaceae</taxon>
        <taxon>Desulforamulus</taxon>
    </lineage>
</organism>
<evidence type="ECO:0000255" key="1">
    <source>
        <dbReference type="HAMAP-Rule" id="MF_00707"/>
    </source>
</evidence>